<protein>
    <recommendedName>
        <fullName evidence="2">Chaperonin GroEL</fullName>
        <ecNumber evidence="2">5.6.1.7</ecNumber>
    </recommendedName>
    <alternativeName>
        <fullName evidence="2">60 kDa chaperonin</fullName>
    </alternativeName>
    <alternativeName>
        <fullName evidence="2">Chaperonin-60</fullName>
        <shortName evidence="2">Cpn60</shortName>
    </alternativeName>
</protein>
<dbReference type="EC" id="5.6.1.7" evidence="2"/>
<dbReference type="EMBL" id="AE014075">
    <property type="protein sequence ID" value="AAN83649.1"/>
    <property type="molecule type" value="Genomic_DNA"/>
</dbReference>
<dbReference type="RefSeq" id="WP_000729117.1">
    <property type="nucleotide sequence ID" value="NZ_CP051263.1"/>
</dbReference>
<dbReference type="SMR" id="P0A6F6"/>
<dbReference type="STRING" id="199310.c5227"/>
<dbReference type="GeneID" id="93777681"/>
<dbReference type="KEGG" id="ecc:c5227"/>
<dbReference type="eggNOG" id="COG0459">
    <property type="taxonomic scope" value="Bacteria"/>
</dbReference>
<dbReference type="HOGENOM" id="CLU_016503_3_0_6"/>
<dbReference type="BioCyc" id="ECOL199310:C5227-MONOMER"/>
<dbReference type="Proteomes" id="UP000001410">
    <property type="component" value="Chromosome"/>
</dbReference>
<dbReference type="GO" id="GO:0005737">
    <property type="term" value="C:cytoplasm"/>
    <property type="evidence" value="ECO:0007669"/>
    <property type="project" value="UniProtKB-SubCell"/>
</dbReference>
<dbReference type="GO" id="GO:0005524">
    <property type="term" value="F:ATP binding"/>
    <property type="evidence" value="ECO:0007669"/>
    <property type="project" value="UniProtKB-UniRule"/>
</dbReference>
<dbReference type="GO" id="GO:0140662">
    <property type="term" value="F:ATP-dependent protein folding chaperone"/>
    <property type="evidence" value="ECO:0007669"/>
    <property type="project" value="InterPro"/>
</dbReference>
<dbReference type="GO" id="GO:0016853">
    <property type="term" value="F:isomerase activity"/>
    <property type="evidence" value="ECO:0007669"/>
    <property type="project" value="UniProtKB-KW"/>
</dbReference>
<dbReference type="GO" id="GO:0051082">
    <property type="term" value="F:unfolded protein binding"/>
    <property type="evidence" value="ECO:0007669"/>
    <property type="project" value="UniProtKB-UniRule"/>
</dbReference>
<dbReference type="GO" id="GO:0042026">
    <property type="term" value="P:protein refolding"/>
    <property type="evidence" value="ECO:0007669"/>
    <property type="project" value="UniProtKB-UniRule"/>
</dbReference>
<dbReference type="CDD" id="cd03344">
    <property type="entry name" value="GroEL"/>
    <property type="match status" value="1"/>
</dbReference>
<dbReference type="FunFam" id="1.10.560.10:FF:000001">
    <property type="entry name" value="60 kDa chaperonin"/>
    <property type="match status" value="1"/>
</dbReference>
<dbReference type="FunFam" id="3.50.7.10:FF:000001">
    <property type="entry name" value="60 kDa chaperonin"/>
    <property type="match status" value="1"/>
</dbReference>
<dbReference type="Gene3D" id="3.50.7.10">
    <property type="entry name" value="GroEL"/>
    <property type="match status" value="1"/>
</dbReference>
<dbReference type="Gene3D" id="1.10.560.10">
    <property type="entry name" value="GroEL-like equatorial domain"/>
    <property type="match status" value="1"/>
</dbReference>
<dbReference type="Gene3D" id="3.30.260.10">
    <property type="entry name" value="TCP-1-like chaperonin intermediate domain"/>
    <property type="match status" value="1"/>
</dbReference>
<dbReference type="HAMAP" id="MF_00600">
    <property type="entry name" value="CH60"/>
    <property type="match status" value="1"/>
</dbReference>
<dbReference type="InterPro" id="IPR018370">
    <property type="entry name" value="Chaperonin_Cpn60_CS"/>
</dbReference>
<dbReference type="InterPro" id="IPR001844">
    <property type="entry name" value="Cpn60/GroEL"/>
</dbReference>
<dbReference type="InterPro" id="IPR002423">
    <property type="entry name" value="Cpn60/GroEL/TCP-1"/>
</dbReference>
<dbReference type="InterPro" id="IPR027409">
    <property type="entry name" value="GroEL-like_apical_dom_sf"/>
</dbReference>
<dbReference type="InterPro" id="IPR027413">
    <property type="entry name" value="GROEL-like_equatorial_sf"/>
</dbReference>
<dbReference type="InterPro" id="IPR027410">
    <property type="entry name" value="TCP-1-like_intermed_sf"/>
</dbReference>
<dbReference type="NCBIfam" id="TIGR02348">
    <property type="entry name" value="GroEL"/>
    <property type="match status" value="1"/>
</dbReference>
<dbReference type="NCBIfam" id="NF000592">
    <property type="entry name" value="PRK00013.1"/>
    <property type="match status" value="1"/>
</dbReference>
<dbReference type="NCBIfam" id="NF009487">
    <property type="entry name" value="PRK12849.1"/>
    <property type="match status" value="1"/>
</dbReference>
<dbReference type="NCBIfam" id="NF009488">
    <property type="entry name" value="PRK12850.1"/>
    <property type="match status" value="1"/>
</dbReference>
<dbReference type="NCBIfam" id="NF009489">
    <property type="entry name" value="PRK12851.1"/>
    <property type="match status" value="1"/>
</dbReference>
<dbReference type="PANTHER" id="PTHR45633">
    <property type="entry name" value="60 KDA HEAT SHOCK PROTEIN, MITOCHONDRIAL"/>
    <property type="match status" value="1"/>
</dbReference>
<dbReference type="Pfam" id="PF00118">
    <property type="entry name" value="Cpn60_TCP1"/>
    <property type="match status" value="1"/>
</dbReference>
<dbReference type="PRINTS" id="PR00298">
    <property type="entry name" value="CHAPERONIN60"/>
</dbReference>
<dbReference type="SUPFAM" id="SSF52029">
    <property type="entry name" value="GroEL apical domain-like"/>
    <property type="match status" value="1"/>
</dbReference>
<dbReference type="SUPFAM" id="SSF48592">
    <property type="entry name" value="GroEL equatorial domain-like"/>
    <property type="match status" value="1"/>
</dbReference>
<dbReference type="SUPFAM" id="SSF54849">
    <property type="entry name" value="GroEL-intermediate domain like"/>
    <property type="match status" value="1"/>
</dbReference>
<dbReference type="PROSITE" id="PS00296">
    <property type="entry name" value="CHAPERONINS_CPN60"/>
    <property type="match status" value="1"/>
</dbReference>
<keyword id="KW-0067">ATP-binding</keyword>
<keyword id="KW-0143">Chaperone</keyword>
<keyword id="KW-0963">Cytoplasm</keyword>
<keyword id="KW-0413">Isomerase</keyword>
<keyword id="KW-0547">Nucleotide-binding</keyword>
<keyword id="KW-1185">Reference proteome</keyword>
<gene>
    <name evidence="2" type="primary">groEL</name>
    <name evidence="2" type="synonym">groL</name>
    <name type="synonym">mopA</name>
    <name type="ordered locus">c5227</name>
</gene>
<feature type="initiator methionine" description="Removed" evidence="1">
    <location>
        <position position="1"/>
    </location>
</feature>
<feature type="chain" id="PRO_0000063359" description="Chaperonin GroEL">
    <location>
        <begin position="2"/>
        <end position="548"/>
    </location>
</feature>
<feature type="binding site" evidence="2">
    <location>
        <begin position="30"/>
        <end position="33"/>
    </location>
    <ligand>
        <name>ATP</name>
        <dbReference type="ChEBI" id="CHEBI:30616"/>
    </ligand>
</feature>
<feature type="binding site" evidence="2">
    <location>
        <position position="51"/>
    </location>
    <ligand>
        <name>ATP</name>
        <dbReference type="ChEBI" id="CHEBI:30616"/>
    </ligand>
</feature>
<feature type="binding site" evidence="2">
    <location>
        <begin position="87"/>
        <end position="91"/>
    </location>
    <ligand>
        <name>ATP</name>
        <dbReference type="ChEBI" id="CHEBI:30616"/>
    </ligand>
</feature>
<feature type="binding site" evidence="2">
    <location>
        <position position="415"/>
    </location>
    <ligand>
        <name>ATP</name>
        <dbReference type="ChEBI" id="CHEBI:30616"/>
    </ligand>
</feature>
<feature type="binding site" evidence="2">
    <location>
        <begin position="479"/>
        <end position="481"/>
    </location>
    <ligand>
        <name>ATP</name>
        <dbReference type="ChEBI" id="CHEBI:30616"/>
    </ligand>
</feature>
<feature type="binding site" evidence="2">
    <location>
        <position position="495"/>
    </location>
    <ligand>
        <name>ATP</name>
        <dbReference type="ChEBI" id="CHEBI:30616"/>
    </ligand>
</feature>
<accession>P0A6F6</accession>
<accession>P06139</accession>
<sequence length="548" mass="57329">MAAKDVKFGNDARVKMLRGVNVLADAVKVTLGPKGRNVVLDKSFGAPTITKDGVSVAREIELEDKFENMGAQMVKEVASKANDAAGDGTTTATVLAQAIITEGLKAVAAGMNPMDLKRGIDKAVTAAVEELKALSVPCSDSKAIAQVGTISANSDETVGKLIAEAMDKVGKEGVITVEDGTGLQDELDVVEGMQFDRGYLSPYFINKPETGAVELESPFILLADKKISNIREMLPVLEAVAKAGKPLLIIAEDVEGEALATLVVNTMRGIVKVAAVKAPGFGDRRKAMLQDIATLTGGTVISEEIGMELEKATLEDLGQAKRVVINKDTTTIIDGVGEEAAIQGRVAQIRQQIEEATSDYDREKLQERVAKLAGGVAVIKVGAATEVEMKEKKARVEDALHATRAAVEEGVVAGGGVALIRVASKLADLRGQNEDQNVGIKVALRAMEAPLRQIVLNCGEEPSVVANTVKGGDGNYGYNAATEEYGNMIDMGILDPTKVTRSALQYAASVAGLMITTECMVTDLPKNDAADLGAAGGMGGMGGMGGMM</sequence>
<proteinExistence type="inferred from homology"/>
<name>CH60_ECOL6</name>
<comment type="function">
    <text evidence="2">Together with its co-chaperonin GroES, plays an essential role in assisting protein folding. The GroEL-GroES system forms a nano-cage that allows encapsulation of the non-native substrate proteins and provides a physical environment optimized to promote and accelerate protein folding.</text>
</comment>
<comment type="catalytic activity">
    <reaction evidence="2">
        <text>ATP + H2O + a folded polypeptide = ADP + phosphate + an unfolded polypeptide.</text>
        <dbReference type="EC" id="5.6.1.7"/>
    </reaction>
</comment>
<comment type="subunit">
    <text evidence="2">Forms a cylinder of 14 subunits composed of two heptameric rings stacked back-to-back. Interacts with the co-chaperonin GroES.</text>
</comment>
<comment type="subcellular location">
    <subcellularLocation>
        <location evidence="2">Cytoplasm</location>
    </subcellularLocation>
</comment>
<comment type="similarity">
    <text evidence="2">Belongs to the chaperonin (HSP60) family.</text>
</comment>
<reference key="1">
    <citation type="journal article" date="2002" name="Proc. Natl. Acad. Sci. U.S.A.">
        <title>Extensive mosaic structure revealed by the complete genome sequence of uropathogenic Escherichia coli.</title>
        <authorList>
            <person name="Welch R.A."/>
            <person name="Burland V."/>
            <person name="Plunkett G. III"/>
            <person name="Redford P."/>
            <person name="Roesch P."/>
            <person name="Rasko D."/>
            <person name="Buckles E.L."/>
            <person name="Liou S.-R."/>
            <person name="Boutin A."/>
            <person name="Hackett J."/>
            <person name="Stroud D."/>
            <person name="Mayhew G.F."/>
            <person name="Rose D.J."/>
            <person name="Zhou S."/>
            <person name="Schwartz D.C."/>
            <person name="Perna N.T."/>
            <person name="Mobley H.L.T."/>
            <person name="Donnenberg M.S."/>
            <person name="Blattner F.R."/>
        </authorList>
    </citation>
    <scope>NUCLEOTIDE SEQUENCE [LARGE SCALE GENOMIC DNA]</scope>
    <source>
        <strain>CFT073 / ATCC 700928 / UPEC</strain>
    </source>
</reference>
<organism>
    <name type="scientific">Escherichia coli O6:H1 (strain CFT073 / ATCC 700928 / UPEC)</name>
    <dbReference type="NCBI Taxonomy" id="199310"/>
    <lineage>
        <taxon>Bacteria</taxon>
        <taxon>Pseudomonadati</taxon>
        <taxon>Pseudomonadota</taxon>
        <taxon>Gammaproteobacteria</taxon>
        <taxon>Enterobacterales</taxon>
        <taxon>Enterobacteriaceae</taxon>
        <taxon>Escherichia</taxon>
    </lineage>
</organism>
<evidence type="ECO:0000250" key="1"/>
<evidence type="ECO:0000255" key="2">
    <source>
        <dbReference type="HAMAP-Rule" id="MF_00600"/>
    </source>
</evidence>